<keyword id="KW-0240">DNA-directed RNA polymerase</keyword>
<keyword id="KW-0548">Nucleotidyltransferase</keyword>
<keyword id="KW-1185">Reference proteome</keyword>
<keyword id="KW-0804">Transcription</keyword>
<keyword id="KW-0808">Transferase</keyword>
<evidence type="ECO:0000255" key="1">
    <source>
        <dbReference type="HAMAP-Rule" id="MF_00059"/>
    </source>
</evidence>
<organism>
    <name type="scientific">Alcanivorax borkumensis (strain ATCC 700651 / DSM 11573 / NCIMB 13689 / SK2)</name>
    <dbReference type="NCBI Taxonomy" id="393595"/>
    <lineage>
        <taxon>Bacteria</taxon>
        <taxon>Pseudomonadati</taxon>
        <taxon>Pseudomonadota</taxon>
        <taxon>Gammaproteobacteria</taxon>
        <taxon>Oceanospirillales</taxon>
        <taxon>Alcanivoracaceae</taxon>
        <taxon>Alcanivorax</taxon>
    </lineage>
</organism>
<protein>
    <recommendedName>
        <fullName evidence="1">DNA-directed RNA polymerase subunit alpha</fullName>
        <shortName evidence="1">RNAP subunit alpha</shortName>
        <ecNumber evidence="1">2.7.7.6</ecNumber>
    </recommendedName>
    <alternativeName>
        <fullName evidence="1">RNA polymerase subunit alpha</fullName>
    </alternativeName>
    <alternativeName>
        <fullName evidence="1">Transcriptase subunit alpha</fullName>
    </alternativeName>
</protein>
<feature type="chain" id="PRO_0000264477" description="DNA-directed RNA polymerase subunit alpha">
    <location>
        <begin position="1"/>
        <end position="335"/>
    </location>
</feature>
<feature type="region of interest" description="Alpha N-terminal domain (alpha-NTD)" evidence="1">
    <location>
        <begin position="1"/>
        <end position="233"/>
    </location>
</feature>
<feature type="region of interest" description="Alpha C-terminal domain (alpha-CTD)" evidence="1">
    <location>
        <begin position="247"/>
        <end position="335"/>
    </location>
</feature>
<dbReference type="EC" id="2.7.7.6" evidence="1"/>
<dbReference type="EMBL" id="AM286690">
    <property type="protein sequence ID" value="CAL15870.1"/>
    <property type="molecule type" value="Genomic_DNA"/>
</dbReference>
<dbReference type="RefSeq" id="WP_011587708.1">
    <property type="nucleotide sequence ID" value="NC_008260.1"/>
</dbReference>
<dbReference type="SMR" id="Q0VSH8"/>
<dbReference type="STRING" id="393595.ABO_0422"/>
<dbReference type="KEGG" id="abo:ABO_0422"/>
<dbReference type="eggNOG" id="COG0202">
    <property type="taxonomic scope" value="Bacteria"/>
</dbReference>
<dbReference type="HOGENOM" id="CLU_053084_0_0_6"/>
<dbReference type="OrthoDB" id="9805706at2"/>
<dbReference type="Proteomes" id="UP000008871">
    <property type="component" value="Chromosome"/>
</dbReference>
<dbReference type="GO" id="GO:0005737">
    <property type="term" value="C:cytoplasm"/>
    <property type="evidence" value="ECO:0007669"/>
    <property type="project" value="UniProtKB-ARBA"/>
</dbReference>
<dbReference type="GO" id="GO:0000428">
    <property type="term" value="C:DNA-directed RNA polymerase complex"/>
    <property type="evidence" value="ECO:0007669"/>
    <property type="project" value="UniProtKB-KW"/>
</dbReference>
<dbReference type="GO" id="GO:0003677">
    <property type="term" value="F:DNA binding"/>
    <property type="evidence" value="ECO:0007669"/>
    <property type="project" value="UniProtKB-UniRule"/>
</dbReference>
<dbReference type="GO" id="GO:0003899">
    <property type="term" value="F:DNA-directed RNA polymerase activity"/>
    <property type="evidence" value="ECO:0007669"/>
    <property type="project" value="UniProtKB-UniRule"/>
</dbReference>
<dbReference type="GO" id="GO:0046983">
    <property type="term" value="F:protein dimerization activity"/>
    <property type="evidence" value="ECO:0007669"/>
    <property type="project" value="InterPro"/>
</dbReference>
<dbReference type="GO" id="GO:0006351">
    <property type="term" value="P:DNA-templated transcription"/>
    <property type="evidence" value="ECO:0007669"/>
    <property type="project" value="UniProtKB-UniRule"/>
</dbReference>
<dbReference type="CDD" id="cd06928">
    <property type="entry name" value="RNAP_alpha_NTD"/>
    <property type="match status" value="1"/>
</dbReference>
<dbReference type="FunFam" id="1.10.150.20:FF:000001">
    <property type="entry name" value="DNA-directed RNA polymerase subunit alpha"/>
    <property type="match status" value="1"/>
</dbReference>
<dbReference type="FunFam" id="2.170.120.12:FF:000001">
    <property type="entry name" value="DNA-directed RNA polymerase subunit alpha"/>
    <property type="match status" value="1"/>
</dbReference>
<dbReference type="Gene3D" id="1.10.150.20">
    <property type="entry name" value="5' to 3' exonuclease, C-terminal subdomain"/>
    <property type="match status" value="1"/>
</dbReference>
<dbReference type="Gene3D" id="2.170.120.12">
    <property type="entry name" value="DNA-directed RNA polymerase, insert domain"/>
    <property type="match status" value="1"/>
</dbReference>
<dbReference type="Gene3D" id="3.30.1360.10">
    <property type="entry name" value="RNA polymerase, RBP11-like subunit"/>
    <property type="match status" value="1"/>
</dbReference>
<dbReference type="HAMAP" id="MF_00059">
    <property type="entry name" value="RNApol_bact_RpoA"/>
    <property type="match status" value="1"/>
</dbReference>
<dbReference type="InterPro" id="IPR011262">
    <property type="entry name" value="DNA-dir_RNA_pol_insert"/>
</dbReference>
<dbReference type="InterPro" id="IPR011263">
    <property type="entry name" value="DNA-dir_RNA_pol_RpoA/D/Rpb3"/>
</dbReference>
<dbReference type="InterPro" id="IPR011773">
    <property type="entry name" value="DNA-dir_RpoA"/>
</dbReference>
<dbReference type="InterPro" id="IPR036603">
    <property type="entry name" value="RBP11-like"/>
</dbReference>
<dbReference type="InterPro" id="IPR011260">
    <property type="entry name" value="RNAP_asu_C"/>
</dbReference>
<dbReference type="InterPro" id="IPR036643">
    <property type="entry name" value="RNApol_insert_sf"/>
</dbReference>
<dbReference type="NCBIfam" id="NF003513">
    <property type="entry name" value="PRK05182.1-2"/>
    <property type="match status" value="1"/>
</dbReference>
<dbReference type="NCBIfam" id="NF003519">
    <property type="entry name" value="PRK05182.2-5"/>
    <property type="match status" value="1"/>
</dbReference>
<dbReference type="NCBIfam" id="TIGR02027">
    <property type="entry name" value="rpoA"/>
    <property type="match status" value="1"/>
</dbReference>
<dbReference type="Pfam" id="PF01000">
    <property type="entry name" value="RNA_pol_A_bac"/>
    <property type="match status" value="1"/>
</dbReference>
<dbReference type="Pfam" id="PF03118">
    <property type="entry name" value="RNA_pol_A_CTD"/>
    <property type="match status" value="1"/>
</dbReference>
<dbReference type="Pfam" id="PF01193">
    <property type="entry name" value="RNA_pol_L"/>
    <property type="match status" value="1"/>
</dbReference>
<dbReference type="SMART" id="SM00662">
    <property type="entry name" value="RPOLD"/>
    <property type="match status" value="1"/>
</dbReference>
<dbReference type="SUPFAM" id="SSF47789">
    <property type="entry name" value="C-terminal domain of RNA polymerase alpha subunit"/>
    <property type="match status" value="1"/>
</dbReference>
<dbReference type="SUPFAM" id="SSF56553">
    <property type="entry name" value="Insert subdomain of RNA polymerase alpha subunit"/>
    <property type="match status" value="1"/>
</dbReference>
<dbReference type="SUPFAM" id="SSF55257">
    <property type="entry name" value="RBP11-like subunits of RNA polymerase"/>
    <property type="match status" value="1"/>
</dbReference>
<comment type="function">
    <text evidence="1">DNA-dependent RNA polymerase catalyzes the transcription of DNA into RNA using the four ribonucleoside triphosphates as substrates.</text>
</comment>
<comment type="catalytic activity">
    <reaction evidence="1">
        <text>RNA(n) + a ribonucleoside 5'-triphosphate = RNA(n+1) + diphosphate</text>
        <dbReference type="Rhea" id="RHEA:21248"/>
        <dbReference type="Rhea" id="RHEA-COMP:14527"/>
        <dbReference type="Rhea" id="RHEA-COMP:17342"/>
        <dbReference type="ChEBI" id="CHEBI:33019"/>
        <dbReference type="ChEBI" id="CHEBI:61557"/>
        <dbReference type="ChEBI" id="CHEBI:140395"/>
        <dbReference type="EC" id="2.7.7.6"/>
    </reaction>
</comment>
<comment type="subunit">
    <text evidence="1">Homodimer. The RNAP catalytic core consists of 2 alpha, 1 beta, 1 beta' and 1 omega subunit. When a sigma factor is associated with the core the holoenzyme is formed, which can initiate transcription.</text>
</comment>
<comment type="domain">
    <text evidence="1">The N-terminal domain is essential for RNAP assembly and basal transcription, whereas the C-terminal domain is involved in interaction with transcriptional regulators and with upstream promoter elements.</text>
</comment>
<comment type="similarity">
    <text evidence="1">Belongs to the RNA polymerase alpha chain family.</text>
</comment>
<sequence>MTAVNDFLTPRSIAVNAINQTHAKVVLEPLERGFGHTLGTALRRILISSMPGCAITEVEIDGVQHEYSSIEGVQEDVINILLNLKGVALKMEDSEETTLELVKKGPGVVTANDIQRDHSVEIVNPDHLICTITGDTELRVKLKVQKGRGYVAADSRQSEDDETRGIGRLQLDASYSPVRRVAYVVEAARVEQRTDLDKLVIDLETDGTIEPEEAIRRAATILQQQIAVFVDLEQDAKPEPKQEREEIDPILLRPVDDLELTVRSANCLKAENIYYIGDLVQRTEVELLKTPNLGKKSLTEIKDVLASKGLSLGMRLENWPPVSLRDDDRLNAKLR</sequence>
<proteinExistence type="inferred from homology"/>
<gene>
    <name evidence="1" type="primary">rpoA</name>
    <name type="ordered locus">ABO_0422</name>
</gene>
<accession>Q0VSH8</accession>
<name>RPOA_ALCBS</name>
<reference key="1">
    <citation type="journal article" date="2006" name="Nat. Biotechnol.">
        <title>Genome sequence of the ubiquitous hydrocarbon-degrading marine bacterium Alcanivorax borkumensis.</title>
        <authorList>
            <person name="Schneiker S."/>
            <person name="Martins dos Santos V.A.P."/>
            <person name="Bartels D."/>
            <person name="Bekel T."/>
            <person name="Brecht M."/>
            <person name="Buhrmester J."/>
            <person name="Chernikova T.N."/>
            <person name="Denaro R."/>
            <person name="Ferrer M."/>
            <person name="Gertler C."/>
            <person name="Goesmann A."/>
            <person name="Golyshina O.V."/>
            <person name="Kaminski F."/>
            <person name="Khachane A.N."/>
            <person name="Lang S."/>
            <person name="Linke B."/>
            <person name="McHardy A.C."/>
            <person name="Meyer F."/>
            <person name="Nechitaylo T."/>
            <person name="Puehler A."/>
            <person name="Regenhardt D."/>
            <person name="Rupp O."/>
            <person name="Sabirova J.S."/>
            <person name="Selbitschka W."/>
            <person name="Yakimov M.M."/>
            <person name="Timmis K.N."/>
            <person name="Vorhoelter F.-J."/>
            <person name="Weidner S."/>
            <person name="Kaiser O."/>
            <person name="Golyshin P.N."/>
        </authorList>
    </citation>
    <scope>NUCLEOTIDE SEQUENCE [LARGE SCALE GENOMIC DNA]</scope>
    <source>
        <strain>ATCC 700651 / DSM 11573 / NCIMB 13689 / SK2</strain>
    </source>
</reference>